<organism>
    <name type="scientific">Equine herpesvirus 1 (strain Ab4p)</name>
    <name type="common">EHV-1</name>
    <name type="synonym">Equine abortion virus</name>
    <dbReference type="NCBI Taxonomy" id="31520"/>
    <lineage>
        <taxon>Viruses</taxon>
        <taxon>Duplodnaviria</taxon>
        <taxon>Heunggongvirae</taxon>
        <taxon>Peploviricota</taxon>
        <taxon>Herviviricetes</taxon>
        <taxon>Herpesvirales</taxon>
        <taxon>Orthoherpesviridae</taxon>
        <taxon>Alphaherpesvirinae</taxon>
        <taxon>Varicellovirus</taxon>
        <taxon>Varicellovirus equidalpha1</taxon>
        <taxon>Equid alphaherpesvirus 1</taxon>
    </lineage>
</organism>
<organismHost>
    <name type="scientific">Equus caballus</name>
    <name type="common">Horse</name>
    <dbReference type="NCBI Taxonomy" id="9796"/>
</organismHost>
<comment type="function">
    <text evidence="1">Plays a role in efficient localization of neo-synthesized capsids to nuclear replication compartments, thereby controlling cleavage and packaging of virus genomic DNA.</text>
</comment>
<comment type="subcellular location">
    <subcellularLocation>
        <location>Host cytoplasm</location>
    </subcellularLocation>
    <subcellularLocation>
        <location>Host nucleus</location>
    </subcellularLocation>
    <text evidence="1">Mainly cytoplasmic in transfected cell culture.</text>
</comment>
<comment type="similarity">
    <text evidence="3">Belongs to the herpesviridae UL32 protein family.</text>
</comment>
<comment type="caution">
    <text evidence="3">Was originally thought to be an envelope glycoprotein.</text>
</comment>
<dbReference type="EMBL" id="AY665713">
    <property type="protein sequence ID" value="AAT67285.1"/>
    <property type="molecule type" value="Genomic_DNA"/>
</dbReference>
<dbReference type="PIR" id="B36798">
    <property type="entry name" value="WZBEC1"/>
</dbReference>
<dbReference type="SMR" id="P69329"/>
<dbReference type="KEGG" id="vg:1487568"/>
<dbReference type="Proteomes" id="UP000001189">
    <property type="component" value="Segment"/>
</dbReference>
<dbReference type="GO" id="GO:0030430">
    <property type="term" value="C:host cell cytoplasm"/>
    <property type="evidence" value="ECO:0007669"/>
    <property type="project" value="UniProtKB-SubCell"/>
</dbReference>
<dbReference type="GO" id="GO:0042025">
    <property type="term" value="C:host cell nucleus"/>
    <property type="evidence" value="ECO:0007669"/>
    <property type="project" value="UniProtKB-SubCell"/>
</dbReference>
<dbReference type="GO" id="GO:0019031">
    <property type="term" value="C:viral envelope"/>
    <property type="evidence" value="ECO:0007669"/>
    <property type="project" value="InterPro"/>
</dbReference>
<dbReference type="GO" id="GO:0008270">
    <property type="term" value="F:zinc ion binding"/>
    <property type="evidence" value="ECO:0007669"/>
    <property type="project" value="UniProtKB-KW"/>
</dbReference>
<dbReference type="InterPro" id="IPR002597">
    <property type="entry name" value="Herpes_env"/>
</dbReference>
<dbReference type="Pfam" id="PF01673">
    <property type="entry name" value="Herpes_env"/>
    <property type="match status" value="1"/>
</dbReference>
<dbReference type="PROSITE" id="PS51988">
    <property type="entry name" value="HERPESVIRUS_UL32"/>
    <property type="match status" value="1"/>
</dbReference>
<proteinExistence type="inferred from homology"/>
<accession>P69329</accession>
<accession>P28952</accession>
<accession>Q6S6P3</accession>
<gene>
    <name type="ordered locus">28</name>
</gene>
<evidence type="ECO:0000250" key="1"/>
<evidence type="ECO:0000255" key="2">
    <source>
        <dbReference type="PROSITE-ProRule" id="PRU01332"/>
    </source>
</evidence>
<evidence type="ECO:0000305" key="3"/>
<name>UL32_EHV1B</name>
<sequence length="620" mass="67301">MAASCNLDVIGEDGGCALTGGWQPGAFERPYMGFDARLLSTNSSLCSELIFSAHLMQISPTPQPREQVDVCEDPDNDPPEPSCAQFVDAVADSLALDKLCLICRTIDLYRRQFGLSPQWIADYAMLCTKTLAAPPCAVATVVAAFEFVYLMDKHYLRRGKTTLVGAFARRVLTLVDIQRHFFLHVCFRTDGGVPRCAASGTAPAATAMAGLGMADKVQYSNYSFLVQSSTRAMLLTVADVPSGDDGALQAVPHGRHGAGRPADGGGGVFGPKQQSTVAALMSWKECAKMIDCSGSERRRPGATMTCCERARADDDEYERQLLSTENTYLGSADNQAEGGNDTHLKWGYADLTLLLLSQSSTWEASEKTSLASQSRRACVEEYWASHRTVLARDTAPRFARFVDADAVPDTATGPVLATTLKHVRSRGRTCAECVLCNLILTREHWLALRRFKRDVISYSSNNANLFDCISPVLSALSDANSEPLAGDCGVGGGGTCPEDSGRFLELMHAAGTEAIYKHLFCDPMCALVELQTNPSVLFSPIGPPPEPDEIELQKARLASENWFSGRVCAGLWALAFTFKTYQIFTPKPTACAAFIKDAGLLLRRHNLPLISLEHTLCNYV</sequence>
<protein>
    <recommendedName>
        <fullName>Packaging protein UL32 homolog</fullName>
    </recommendedName>
</protein>
<reference key="1">
    <citation type="journal article" date="1992" name="Virology">
        <title>The DNA sequence of equine herpesvirus-1.</title>
        <authorList>
            <person name="Telford E.A.R."/>
            <person name="Watson M.S."/>
            <person name="McBride K."/>
            <person name="Davison A.J."/>
        </authorList>
    </citation>
    <scope>NUCLEOTIDE SEQUENCE [LARGE SCALE GENOMIC DNA]</scope>
</reference>
<keyword id="KW-1035">Host cytoplasm</keyword>
<keyword id="KW-1048">Host nucleus</keyword>
<keyword id="KW-0479">Metal-binding</keyword>
<keyword id="KW-1185">Reference proteome</keyword>
<keyword id="KW-0862">Zinc</keyword>
<keyword id="KW-0863">Zinc-finger</keyword>
<feature type="chain" id="PRO_0000116016" description="Packaging protein UL32 homolog">
    <location>
        <begin position="1"/>
        <end position="620"/>
    </location>
</feature>
<feature type="region of interest" description="Zinc finger 1" evidence="2">
    <location>
        <begin position="100"/>
        <end position="186"/>
    </location>
</feature>
<feature type="region of interest" description="Zinc finger 3" evidence="2">
    <location>
        <begin position="306"/>
        <end position="605"/>
    </location>
</feature>
<feature type="region of interest" description="Zinc finger 2" evidence="2">
    <location>
        <begin position="433"/>
        <end position="525"/>
    </location>
</feature>
<feature type="binding site" evidence="2">
    <location>
        <position position="100"/>
    </location>
    <ligand>
        <name>Zn(2+)</name>
        <dbReference type="ChEBI" id="CHEBI:29105"/>
        <label>1</label>
    </ligand>
</feature>
<feature type="binding site" evidence="2">
    <location>
        <position position="103"/>
    </location>
    <ligand>
        <name>Zn(2+)</name>
        <dbReference type="ChEBI" id="CHEBI:29105"/>
        <label>1</label>
    </ligand>
</feature>
<feature type="binding site" evidence="2">
    <location>
        <position position="180"/>
    </location>
    <ligand>
        <name>Zn(2+)</name>
        <dbReference type="ChEBI" id="CHEBI:29105"/>
        <label>1</label>
    </ligand>
</feature>
<feature type="binding site" evidence="2">
    <location>
        <position position="186"/>
    </location>
    <ligand>
        <name>Zn(2+)</name>
        <dbReference type="ChEBI" id="CHEBI:29105"/>
        <label>1</label>
    </ligand>
</feature>
<feature type="binding site" evidence="2">
    <location>
        <position position="306"/>
    </location>
    <ligand>
        <name>Zn(2+)</name>
        <dbReference type="ChEBI" id="CHEBI:29105"/>
        <label>3</label>
    </ligand>
</feature>
<feature type="binding site" evidence="2">
    <location>
        <position position="307"/>
    </location>
    <ligand>
        <name>Zn(2+)</name>
        <dbReference type="ChEBI" id="CHEBI:29105"/>
        <label>3</label>
    </ligand>
</feature>
<feature type="binding site" evidence="2">
    <location>
        <position position="433"/>
    </location>
    <ligand>
        <name>Zn(2+)</name>
        <dbReference type="ChEBI" id="CHEBI:29105"/>
        <label>2</label>
    </ligand>
</feature>
<feature type="binding site" evidence="2">
    <location>
        <position position="436"/>
    </location>
    <ligand>
        <name>Zn(2+)</name>
        <dbReference type="ChEBI" id="CHEBI:29105"/>
        <label>2</label>
    </ligand>
</feature>
<feature type="binding site" evidence="2">
    <location>
        <position position="518"/>
    </location>
    <ligand>
        <name>Zn(2+)</name>
        <dbReference type="ChEBI" id="CHEBI:29105"/>
        <label>2</label>
    </ligand>
</feature>
<feature type="binding site" evidence="2">
    <location>
        <position position="525"/>
    </location>
    <ligand>
        <name>Zn(2+)</name>
        <dbReference type="ChEBI" id="CHEBI:29105"/>
        <label>2</label>
    </ligand>
</feature>
<feature type="binding site" evidence="2">
    <location>
        <position position="568"/>
    </location>
    <ligand>
        <name>Zn(2+)</name>
        <dbReference type="ChEBI" id="CHEBI:29105"/>
        <label>3</label>
    </ligand>
</feature>
<feature type="binding site" evidence="2">
    <location>
        <position position="605"/>
    </location>
    <ligand>
        <name>Zn(2+)</name>
        <dbReference type="ChEBI" id="CHEBI:29105"/>
        <label>3</label>
    </ligand>
</feature>